<gene>
    <name type="primary">minC</name>
    <name type="ordered locus">NMB0170</name>
</gene>
<accession>Q9K1I0</accession>
<reference key="1">
    <citation type="journal article" date="2000" name="Science">
        <title>Complete genome sequence of Neisseria meningitidis serogroup B strain MC58.</title>
        <authorList>
            <person name="Tettelin H."/>
            <person name="Saunders N.J."/>
            <person name="Heidelberg J.F."/>
            <person name="Jeffries A.C."/>
            <person name="Nelson K.E."/>
            <person name="Eisen J.A."/>
            <person name="Ketchum K.A."/>
            <person name="Hood D.W."/>
            <person name="Peden J.F."/>
            <person name="Dodson R.J."/>
            <person name="Nelson W.C."/>
            <person name="Gwinn M.L."/>
            <person name="DeBoy R.T."/>
            <person name="Peterson J.D."/>
            <person name="Hickey E.K."/>
            <person name="Haft D.H."/>
            <person name="Salzberg S.L."/>
            <person name="White O."/>
            <person name="Fleischmann R.D."/>
            <person name="Dougherty B.A."/>
            <person name="Mason T.M."/>
            <person name="Ciecko A."/>
            <person name="Parksey D.S."/>
            <person name="Blair E."/>
            <person name="Cittone H."/>
            <person name="Clark E.B."/>
            <person name="Cotton M.D."/>
            <person name="Utterback T.R."/>
            <person name="Khouri H.M."/>
            <person name="Qin H."/>
            <person name="Vamathevan J.J."/>
            <person name="Gill J."/>
            <person name="Scarlato V."/>
            <person name="Masignani V."/>
            <person name="Pizza M."/>
            <person name="Grandi G."/>
            <person name="Sun L."/>
            <person name="Smith H.O."/>
            <person name="Fraser C.M."/>
            <person name="Moxon E.R."/>
            <person name="Rappuoli R."/>
            <person name="Venter J.C."/>
        </authorList>
    </citation>
    <scope>NUCLEOTIDE SEQUENCE [LARGE SCALE GENOMIC DNA]</scope>
    <source>
        <strain>ATCC BAA-335 / MC58</strain>
    </source>
</reference>
<feature type="chain" id="PRO_0000189046" description="Probable septum site-determining protein MinC">
    <location>
        <begin position="1"/>
        <end position="237"/>
    </location>
</feature>
<proteinExistence type="inferred from homology"/>
<evidence type="ECO:0000250" key="1"/>
<evidence type="ECO:0000305" key="2"/>
<dbReference type="EMBL" id="AE002098">
    <property type="protein sequence ID" value="AAF40627.1"/>
    <property type="molecule type" value="Genomic_DNA"/>
</dbReference>
<dbReference type="PIR" id="B81230">
    <property type="entry name" value="B81230"/>
</dbReference>
<dbReference type="RefSeq" id="NP_273228.1">
    <property type="nucleotide sequence ID" value="NC_003112.2"/>
</dbReference>
<dbReference type="RefSeq" id="WP_002224775.1">
    <property type="nucleotide sequence ID" value="NC_003112.2"/>
</dbReference>
<dbReference type="SMR" id="Q9K1I0"/>
<dbReference type="FunCoup" id="Q9K1I0">
    <property type="interactions" value="51"/>
</dbReference>
<dbReference type="STRING" id="122586.NMB0170"/>
<dbReference type="PaxDb" id="122586-NMB0170"/>
<dbReference type="KEGG" id="nme:NMB0170"/>
<dbReference type="PATRIC" id="fig|122586.8.peg.211"/>
<dbReference type="HOGENOM" id="CLU_067812_0_0_4"/>
<dbReference type="InParanoid" id="Q9K1I0"/>
<dbReference type="OrthoDB" id="9794530at2"/>
<dbReference type="Proteomes" id="UP000000425">
    <property type="component" value="Chromosome"/>
</dbReference>
<dbReference type="GO" id="GO:0000902">
    <property type="term" value="P:cell morphogenesis"/>
    <property type="evidence" value="ECO:0007669"/>
    <property type="project" value="InterPro"/>
</dbReference>
<dbReference type="GO" id="GO:0000917">
    <property type="term" value="P:division septum assembly"/>
    <property type="evidence" value="ECO:0007669"/>
    <property type="project" value="UniProtKB-KW"/>
</dbReference>
<dbReference type="GO" id="GO:0051302">
    <property type="term" value="P:regulation of cell division"/>
    <property type="evidence" value="ECO:0007669"/>
    <property type="project" value="InterPro"/>
</dbReference>
<dbReference type="GO" id="GO:1901891">
    <property type="term" value="P:regulation of cell septum assembly"/>
    <property type="evidence" value="ECO:0007669"/>
    <property type="project" value="InterPro"/>
</dbReference>
<dbReference type="Gene3D" id="2.160.20.70">
    <property type="match status" value="1"/>
</dbReference>
<dbReference type="Gene3D" id="3.30.70.260">
    <property type="match status" value="1"/>
</dbReference>
<dbReference type="HAMAP" id="MF_00267">
    <property type="entry name" value="MinC"/>
    <property type="match status" value="1"/>
</dbReference>
<dbReference type="InterPro" id="IPR016098">
    <property type="entry name" value="CAP/MinC_C"/>
</dbReference>
<dbReference type="InterPro" id="IPR013033">
    <property type="entry name" value="MinC"/>
</dbReference>
<dbReference type="InterPro" id="IPR036145">
    <property type="entry name" value="MinC_C_sf"/>
</dbReference>
<dbReference type="InterPro" id="IPR007874">
    <property type="entry name" value="MinC_N"/>
</dbReference>
<dbReference type="InterPro" id="IPR005526">
    <property type="entry name" value="Septum_form_inhib_MinC_C"/>
</dbReference>
<dbReference type="NCBIfam" id="TIGR01222">
    <property type="entry name" value="minC"/>
    <property type="match status" value="1"/>
</dbReference>
<dbReference type="PANTHER" id="PTHR34108">
    <property type="entry name" value="SEPTUM SITE-DETERMINING PROTEIN MINC"/>
    <property type="match status" value="1"/>
</dbReference>
<dbReference type="PANTHER" id="PTHR34108:SF1">
    <property type="entry name" value="SEPTUM SITE-DETERMINING PROTEIN MINC"/>
    <property type="match status" value="1"/>
</dbReference>
<dbReference type="Pfam" id="PF03775">
    <property type="entry name" value="MinC_C"/>
    <property type="match status" value="1"/>
</dbReference>
<dbReference type="Pfam" id="PF05209">
    <property type="entry name" value="MinC_N"/>
    <property type="match status" value="1"/>
</dbReference>
<dbReference type="SUPFAM" id="SSF63848">
    <property type="entry name" value="Cell-division inhibitor MinC, C-terminal domain"/>
    <property type="match status" value="1"/>
</dbReference>
<organism>
    <name type="scientific">Neisseria meningitidis serogroup B (strain ATCC BAA-335 / MC58)</name>
    <dbReference type="NCBI Taxonomy" id="122586"/>
    <lineage>
        <taxon>Bacteria</taxon>
        <taxon>Pseudomonadati</taxon>
        <taxon>Pseudomonadota</taxon>
        <taxon>Betaproteobacteria</taxon>
        <taxon>Neisseriales</taxon>
        <taxon>Neisseriaceae</taxon>
        <taxon>Neisseria</taxon>
    </lineage>
</organism>
<comment type="function">
    <text evidence="1">Cell division inhibitor that blocks the formation of polar Z ring septums. Rapidly oscillates between the poles of the cell to destabilize FtsZ filaments that have formed before they mature into polar Z rings. Prevents FtsZ polymerization (By similarity).</text>
</comment>
<comment type="subunit">
    <text evidence="1">Interacts with MinD and FtsZ.</text>
</comment>
<comment type="similarity">
    <text evidence="2">Belongs to the MinC family.</text>
</comment>
<protein>
    <recommendedName>
        <fullName>Probable septum site-determining protein MinC</fullName>
    </recommendedName>
</protein>
<sequence>MMVYIMNAFDIKSTKMDVLSISLHTSDLFDLEDVLVKLGKKFQESGVVPFVLDVQEFDYPESLDLAALVSLFSRHGMQILGLKHSNERWAAAAMKYHLLFCLSHSENVKELGQVEVQKTEDGQKARKTVLITSPVRTGQQVYAEDGDLIVTGAVSQGAELIADGNIHIYAPMRGRALAGAKGDTSARIFIHSMQAELVSVAGIYRNFEQDLPNHLHKQPVQILLQDNRLVISAIGSE</sequence>
<keyword id="KW-0131">Cell cycle</keyword>
<keyword id="KW-0132">Cell division</keyword>
<keyword id="KW-1185">Reference proteome</keyword>
<keyword id="KW-0717">Septation</keyword>
<name>MINC_NEIMB</name>